<reference key="1">
    <citation type="journal article" date="2006" name="Proc. Natl. Acad. Sci. U.S.A.">
        <title>Molecular genetic anatomy of inter- and intraserotype variation in the human bacterial pathogen group A Streptococcus.</title>
        <authorList>
            <person name="Beres S.B."/>
            <person name="Richter E.W."/>
            <person name="Nagiec M.J."/>
            <person name="Sumby P."/>
            <person name="Porcella S.F."/>
            <person name="DeLeo F.R."/>
            <person name="Musser J.M."/>
        </authorList>
    </citation>
    <scope>NUCLEOTIDE SEQUENCE [LARGE SCALE GENOMIC DNA]</scope>
    <source>
        <strain>MGAS10750</strain>
    </source>
</reference>
<protein>
    <recommendedName>
        <fullName evidence="1">Tyrosine--tRNA ligase</fullName>
        <ecNumber evidence="1">6.1.1.1</ecNumber>
    </recommendedName>
    <alternativeName>
        <fullName evidence="1">Tyrosyl-tRNA synthetase</fullName>
        <shortName evidence="1">TyrRS</shortName>
    </alternativeName>
</protein>
<name>SYY_STRPF</name>
<comment type="function">
    <text evidence="1">Catalyzes the attachment of tyrosine to tRNA(Tyr) in a two-step reaction: tyrosine is first activated by ATP to form Tyr-AMP and then transferred to the acceptor end of tRNA(Tyr).</text>
</comment>
<comment type="catalytic activity">
    <reaction evidence="1">
        <text>tRNA(Tyr) + L-tyrosine + ATP = L-tyrosyl-tRNA(Tyr) + AMP + diphosphate + H(+)</text>
        <dbReference type="Rhea" id="RHEA:10220"/>
        <dbReference type="Rhea" id="RHEA-COMP:9706"/>
        <dbReference type="Rhea" id="RHEA-COMP:9707"/>
        <dbReference type="ChEBI" id="CHEBI:15378"/>
        <dbReference type="ChEBI" id="CHEBI:30616"/>
        <dbReference type="ChEBI" id="CHEBI:33019"/>
        <dbReference type="ChEBI" id="CHEBI:58315"/>
        <dbReference type="ChEBI" id="CHEBI:78442"/>
        <dbReference type="ChEBI" id="CHEBI:78536"/>
        <dbReference type="ChEBI" id="CHEBI:456215"/>
        <dbReference type="EC" id="6.1.1.1"/>
    </reaction>
</comment>
<comment type="subunit">
    <text evidence="1">Homodimer.</text>
</comment>
<comment type="subcellular location">
    <subcellularLocation>
        <location evidence="1">Cytoplasm</location>
    </subcellularLocation>
</comment>
<comment type="similarity">
    <text evidence="1">Belongs to the class-I aminoacyl-tRNA synthetase family. TyrS type 1 subfamily.</text>
</comment>
<proteinExistence type="inferred from homology"/>
<dbReference type="EC" id="6.1.1.1" evidence="1"/>
<dbReference type="EMBL" id="CP000262">
    <property type="protein sequence ID" value="ABF37038.1"/>
    <property type="molecule type" value="Genomic_DNA"/>
</dbReference>
<dbReference type="SMR" id="Q1J8X3"/>
<dbReference type="KEGG" id="spi:MGAS10750_Spy0088"/>
<dbReference type="HOGENOM" id="CLU_024003_0_3_9"/>
<dbReference type="Proteomes" id="UP000002434">
    <property type="component" value="Chromosome"/>
</dbReference>
<dbReference type="GO" id="GO:0005829">
    <property type="term" value="C:cytosol"/>
    <property type="evidence" value="ECO:0007669"/>
    <property type="project" value="TreeGrafter"/>
</dbReference>
<dbReference type="GO" id="GO:0005524">
    <property type="term" value="F:ATP binding"/>
    <property type="evidence" value="ECO:0007669"/>
    <property type="project" value="UniProtKB-UniRule"/>
</dbReference>
<dbReference type="GO" id="GO:0003723">
    <property type="term" value="F:RNA binding"/>
    <property type="evidence" value="ECO:0007669"/>
    <property type="project" value="UniProtKB-KW"/>
</dbReference>
<dbReference type="GO" id="GO:0004831">
    <property type="term" value="F:tyrosine-tRNA ligase activity"/>
    <property type="evidence" value="ECO:0007669"/>
    <property type="project" value="UniProtKB-UniRule"/>
</dbReference>
<dbReference type="GO" id="GO:0006437">
    <property type="term" value="P:tyrosyl-tRNA aminoacylation"/>
    <property type="evidence" value="ECO:0007669"/>
    <property type="project" value="UniProtKB-UniRule"/>
</dbReference>
<dbReference type="CDD" id="cd00165">
    <property type="entry name" value="S4"/>
    <property type="match status" value="1"/>
</dbReference>
<dbReference type="CDD" id="cd00805">
    <property type="entry name" value="TyrRS_core"/>
    <property type="match status" value="1"/>
</dbReference>
<dbReference type="FunFam" id="1.10.240.10:FF:000001">
    <property type="entry name" value="Tyrosine--tRNA ligase"/>
    <property type="match status" value="1"/>
</dbReference>
<dbReference type="FunFam" id="3.40.50.620:FF:000008">
    <property type="entry name" value="Tyrosine--tRNA ligase"/>
    <property type="match status" value="1"/>
</dbReference>
<dbReference type="Gene3D" id="3.40.50.620">
    <property type="entry name" value="HUPs"/>
    <property type="match status" value="1"/>
</dbReference>
<dbReference type="Gene3D" id="3.10.290.10">
    <property type="entry name" value="RNA-binding S4 domain"/>
    <property type="match status" value="1"/>
</dbReference>
<dbReference type="Gene3D" id="1.10.240.10">
    <property type="entry name" value="Tyrosyl-Transfer RNA Synthetase"/>
    <property type="match status" value="1"/>
</dbReference>
<dbReference type="HAMAP" id="MF_02006">
    <property type="entry name" value="Tyr_tRNA_synth_type1"/>
    <property type="match status" value="1"/>
</dbReference>
<dbReference type="InterPro" id="IPR001412">
    <property type="entry name" value="aa-tRNA-synth_I_CS"/>
</dbReference>
<dbReference type="InterPro" id="IPR002305">
    <property type="entry name" value="aa-tRNA-synth_Ic"/>
</dbReference>
<dbReference type="InterPro" id="IPR014729">
    <property type="entry name" value="Rossmann-like_a/b/a_fold"/>
</dbReference>
<dbReference type="InterPro" id="IPR002942">
    <property type="entry name" value="S4_RNA-bd"/>
</dbReference>
<dbReference type="InterPro" id="IPR036986">
    <property type="entry name" value="S4_RNA-bd_sf"/>
</dbReference>
<dbReference type="InterPro" id="IPR054608">
    <property type="entry name" value="SYY-like_C"/>
</dbReference>
<dbReference type="InterPro" id="IPR002307">
    <property type="entry name" value="Tyr-tRNA-ligase"/>
</dbReference>
<dbReference type="InterPro" id="IPR024088">
    <property type="entry name" value="Tyr-tRNA-ligase_bac-type"/>
</dbReference>
<dbReference type="InterPro" id="IPR024107">
    <property type="entry name" value="Tyr-tRNA-ligase_bac_1"/>
</dbReference>
<dbReference type="NCBIfam" id="TIGR00234">
    <property type="entry name" value="tyrS"/>
    <property type="match status" value="1"/>
</dbReference>
<dbReference type="PANTHER" id="PTHR11766:SF0">
    <property type="entry name" value="TYROSINE--TRNA LIGASE, MITOCHONDRIAL"/>
    <property type="match status" value="1"/>
</dbReference>
<dbReference type="PANTHER" id="PTHR11766">
    <property type="entry name" value="TYROSYL-TRNA SYNTHETASE"/>
    <property type="match status" value="1"/>
</dbReference>
<dbReference type="Pfam" id="PF22421">
    <property type="entry name" value="SYY_C-terminal"/>
    <property type="match status" value="1"/>
</dbReference>
<dbReference type="Pfam" id="PF00579">
    <property type="entry name" value="tRNA-synt_1b"/>
    <property type="match status" value="1"/>
</dbReference>
<dbReference type="PRINTS" id="PR01040">
    <property type="entry name" value="TRNASYNTHTYR"/>
</dbReference>
<dbReference type="SMART" id="SM00363">
    <property type="entry name" value="S4"/>
    <property type="match status" value="1"/>
</dbReference>
<dbReference type="SUPFAM" id="SSF55174">
    <property type="entry name" value="Alpha-L RNA-binding motif"/>
    <property type="match status" value="1"/>
</dbReference>
<dbReference type="SUPFAM" id="SSF52374">
    <property type="entry name" value="Nucleotidylyl transferase"/>
    <property type="match status" value="1"/>
</dbReference>
<dbReference type="PROSITE" id="PS00178">
    <property type="entry name" value="AA_TRNA_LIGASE_I"/>
    <property type="match status" value="1"/>
</dbReference>
<dbReference type="PROSITE" id="PS50889">
    <property type="entry name" value="S4"/>
    <property type="match status" value="1"/>
</dbReference>
<gene>
    <name evidence="1" type="primary">tyrS</name>
    <name type="ordered locus">MGAS10750_Spy0088</name>
</gene>
<feature type="chain" id="PRO_1000088637" description="Tyrosine--tRNA ligase">
    <location>
        <begin position="1"/>
        <end position="418"/>
    </location>
</feature>
<feature type="domain" description="S4 RNA-binding" evidence="1">
    <location>
        <begin position="352"/>
        <end position="418"/>
    </location>
</feature>
<feature type="short sequence motif" description="'HIGH' region">
    <location>
        <begin position="39"/>
        <end position="48"/>
    </location>
</feature>
<feature type="short sequence motif" description="'KMSKS' region">
    <location>
        <begin position="229"/>
        <end position="233"/>
    </location>
</feature>
<feature type="binding site" evidence="1">
    <location>
        <position position="34"/>
    </location>
    <ligand>
        <name>L-tyrosine</name>
        <dbReference type="ChEBI" id="CHEBI:58315"/>
    </ligand>
</feature>
<feature type="binding site" evidence="1">
    <location>
        <position position="169"/>
    </location>
    <ligand>
        <name>L-tyrosine</name>
        <dbReference type="ChEBI" id="CHEBI:58315"/>
    </ligand>
</feature>
<feature type="binding site" evidence="1">
    <location>
        <position position="173"/>
    </location>
    <ligand>
        <name>L-tyrosine</name>
        <dbReference type="ChEBI" id="CHEBI:58315"/>
    </ligand>
</feature>
<feature type="binding site" evidence="1">
    <location>
        <position position="232"/>
    </location>
    <ligand>
        <name>ATP</name>
        <dbReference type="ChEBI" id="CHEBI:30616"/>
    </ligand>
</feature>
<evidence type="ECO:0000255" key="1">
    <source>
        <dbReference type="HAMAP-Rule" id="MF_02006"/>
    </source>
</evidence>
<sequence>MNIFEELKARGLVFQTTDEQALVKALTEGQVSYYTGYDPTADSLHLGHLVAILTSRRLQLAGHKPYALVGGATGLIGDPSFKDAERSLQTKETVLEWSDKIKGQLSTFLDFENGDNKAELVNNYDWFSQISFIDFLRDVGKYFTVNYMMSKDSVKKRIETGISYTEFAYQIMQGYDFYELNDKHNVTLQIGGSDQWGNMTAGTELLRKKADKTGHVMTVPLITDSTGKKFGKSEGNAVWLDADKTSPYEMYQFWLNVMDDDAVRFLKIFTFLSLDEIAEIETQFNAARHERLAQKTLAREVVTLVHGEEAYKQALNITEQLFAGNIKNLSANELKQGLSNVPNYHVQSIDNHNIVEILVAAKISPSKRQAREDVQNGAIYINGDRVQDLDYQLSNDDKIDDQLTVIRRGKKKYAVLTY</sequence>
<keyword id="KW-0030">Aminoacyl-tRNA synthetase</keyword>
<keyword id="KW-0067">ATP-binding</keyword>
<keyword id="KW-0963">Cytoplasm</keyword>
<keyword id="KW-0436">Ligase</keyword>
<keyword id="KW-0547">Nucleotide-binding</keyword>
<keyword id="KW-0648">Protein biosynthesis</keyword>
<keyword id="KW-0694">RNA-binding</keyword>
<accession>Q1J8X3</accession>
<organism>
    <name type="scientific">Streptococcus pyogenes serotype M4 (strain MGAS10750)</name>
    <dbReference type="NCBI Taxonomy" id="370554"/>
    <lineage>
        <taxon>Bacteria</taxon>
        <taxon>Bacillati</taxon>
        <taxon>Bacillota</taxon>
        <taxon>Bacilli</taxon>
        <taxon>Lactobacillales</taxon>
        <taxon>Streptococcaceae</taxon>
        <taxon>Streptococcus</taxon>
    </lineage>
</organism>